<sequence>MSSFTHFNDQGRAKMVDISDKKATVRTAIACSSIVVTKEIYDKISHNEIGKGDVLAVAQIAGIMAAKRTSDIIPMCHPLLLKGVDVSFDWKQSDEQYRLLIEVKVKTEGSTGVEMEALTAASATALTVYDMCKAVDKGMIIGETYLLEKTGGKSGDYARKS</sequence>
<accession>Q72Z05</accession>
<keyword id="KW-0456">Lyase</keyword>
<keyword id="KW-0501">Molybdenum cofactor biosynthesis</keyword>
<feature type="chain" id="PRO_1000054066" description="Cyclic pyranopterin monophosphate synthase">
    <location>
        <begin position="1"/>
        <end position="161"/>
    </location>
</feature>
<feature type="active site" evidence="1">
    <location>
        <position position="130"/>
    </location>
</feature>
<feature type="binding site" evidence="1">
    <location>
        <begin position="75"/>
        <end position="77"/>
    </location>
    <ligand>
        <name>substrate</name>
    </ligand>
</feature>
<feature type="binding site" evidence="1">
    <location>
        <begin position="115"/>
        <end position="116"/>
    </location>
    <ligand>
        <name>substrate</name>
    </ligand>
</feature>
<name>MOAC_BACC1</name>
<organism>
    <name type="scientific">Bacillus cereus (strain ATCC 10987 / NRS 248)</name>
    <dbReference type="NCBI Taxonomy" id="222523"/>
    <lineage>
        <taxon>Bacteria</taxon>
        <taxon>Bacillati</taxon>
        <taxon>Bacillota</taxon>
        <taxon>Bacilli</taxon>
        <taxon>Bacillales</taxon>
        <taxon>Bacillaceae</taxon>
        <taxon>Bacillus</taxon>
        <taxon>Bacillus cereus group</taxon>
    </lineage>
</organism>
<reference key="1">
    <citation type="journal article" date="2004" name="Nucleic Acids Res.">
        <title>The genome sequence of Bacillus cereus ATCC 10987 reveals metabolic adaptations and a large plasmid related to Bacillus anthracis pXO1.</title>
        <authorList>
            <person name="Rasko D.A."/>
            <person name="Ravel J."/>
            <person name="Oekstad O.A."/>
            <person name="Helgason E."/>
            <person name="Cer R.Z."/>
            <person name="Jiang L."/>
            <person name="Shores K.A."/>
            <person name="Fouts D.E."/>
            <person name="Tourasse N.J."/>
            <person name="Angiuoli S.V."/>
            <person name="Kolonay J.F."/>
            <person name="Nelson W.C."/>
            <person name="Kolstoe A.-B."/>
            <person name="Fraser C.M."/>
            <person name="Read T.D."/>
        </authorList>
    </citation>
    <scope>NUCLEOTIDE SEQUENCE [LARGE SCALE GENOMIC DNA]</scope>
    <source>
        <strain>ATCC 10987 / NRS 248</strain>
    </source>
</reference>
<comment type="function">
    <text evidence="1">Catalyzes the conversion of (8S)-3',8-cyclo-7,8-dihydroguanosine 5'-triphosphate to cyclic pyranopterin monophosphate (cPMP).</text>
</comment>
<comment type="catalytic activity">
    <reaction evidence="1">
        <text>(8S)-3',8-cyclo-7,8-dihydroguanosine 5'-triphosphate = cyclic pyranopterin phosphate + diphosphate</text>
        <dbReference type="Rhea" id="RHEA:49580"/>
        <dbReference type="ChEBI" id="CHEBI:33019"/>
        <dbReference type="ChEBI" id="CHEBI:59648"/>
        <dbReference type="ChEBI" id="CHEBI:131766"/>
        <dbReference type="EC" id="4.6.1.17"/>
    </reaction>
</comment>
<comment type="pathway">
    <text evidence="1">Cofactor biosynthesis; molybdopterin biosynthesis.</text>
</comment>
<comment type="subunit">
    <text evidence="1">Homohexamer; trimer of dimers.</text>
</comment>
<comment type="similarity">
    <text evidence="1">Belongs to the MoaC family.</text>
</comment>
<proteinExistence type="inferred from homology"/>
<protein>
    <recommendedName>
        <fullName evidence="1">Cyclic pyranopterin monophosphate synthase</fullName>
        <ecNumber evidence="1">4.6.1.17</ecNumber>
    </recommendedName>
    <alternativeName>
        <fullName evidence="1">Molybdenum cofactor biosynthesis protein C</fullName>
    </alternativeName>
</protein>
<gene>
    <name evidence="1" type="primary">moaC</name>
    <name type="ordered locus">BCE_4865</name>
</gene>
<dbReference type="EC" id="4.6.1.17" evidence="1"/>
<dbReference type="EMBL" id="AE017194">
    <property type="protein sequence ID" value="AAS43766.1"/>
    <property type="molecule type" value="Genomic_DNA"/>
</dbReference>
<dbReference type="SMR" id="Q72Z05"/>
<dbReference type="KEGG" id="bca:BCE_4865"/>
<dbReference type="HOGENOM" id="CLU_074693_1_1_9"/>
<dbReference type="UniPathway" id="UPA00344"/>
<dbReference type="Proteomes" id="UP000002527">
    <property type="component" value="Chromosome"/>
</dbReference>
<dbReference type="GO" id="GO:0061799">
    <property type="term" value="F:cyclic pyranopterin monophosphate synthase activity"/>
    <property type="evidence" value="ECO:0007669"/>
    <property type="project" value="UniProtKB-UniRule"/>
</dbReference>
<dbReference type="GO" id="GO:0006777">
    <property type="term" value="P:Mo-molybdopterin cofactor biosynthetic process"/>
    <property type="evidence" value="ECO:0007669"/>
    <property type="project" value="UniProtKB-UniRule"/>
</dbReference>
<dbReference type="CDD" id="cd01420">
    <property type="entry name" value="MoaC_PE"/>
    <property type="match status" value="1"/>
</dbReference>
<dbReference type="Gene3D" id="3.30.70.640">
    <property type="entry name" value="Molybdopterin cofactor biosynthesis C (MoaC) domain"/>
    <property type="match status" value="1"/>
</dbReference>
<dbReference type="HAMAP" id="MF_01224_B">
    <property type="entry name" value="MoaC_B"/>
    <property type="match status" value="1"/>
</dbReference>
<dbReference type="InterPro" id="IPR023045">
    <property type="entry name" value="MoaC"/>
</dbReference>
<dbReference type="InterPro" id="IPR047594">
    <property type="entry name" value="MoaC_bact/euk"/>
</dbReference>
<dbReference type="InterPro" id="IPR036522">
    <property type="entry name" value="MoaC_sf"/>
</dbReference>
<dbReference type="InterPro" id="IPR050105">
    <property type="entry name" value="MoCo_biosynth_MoaA/MoaC"/>
</dbReference>
<dbReference type="InterPro" id="IPR002820">
    <property type="entry name" value="Mopterin_CF_biosynth-C_dom"/>
</dbReference>
<dbReference type="NCBIfam" id="TIGR00581">
    <property type="entry name" value="moaC"/>
    <property type="match status" value="1"/>
</dbReference>
<dbReference type="NCBIfam" id="NF006870">
    <property type="entry name" value="PRK09364.1"/>
    <property type="match status" value="1"/>
</dbReference>
<dbReference type="PANTHER" id="PTHR22960:SF29">
    <property type="entry name" value="CYCLIC PYRANOPTERIN MONOPHOSPHATE SYNTHASE"/>
    <property type="match status" value="1"/>
</dbReference>
<dbReference type="PANTHER" id="PTHR22960">
    <property type="entry name" value="MOLYBDOPTERIN COFACTOR SYNTHESIS PROTEIN A"/>
    <property type="match status" value="1"/>
</dbReference>
<dbReference type="Pfam" id="PF01967">
    <property type="entry name" value="MoaC"/>
    <property type="match status" value="1"/>
</dbReference>
<dbReference type="SUPFAM" id="SSF55040">
    <property type="entry name" value="Molybdenum cofactor biosynthesis protein C, MoaC"/>
    <property type="match status" value="1"/>
</dbReference>
<evidence type="ECO:0000255" key="1">
    <source>
        <dbReference type="HAMAP-Rule" id="MF_01224"/>
    </source>
</evidence>